<feature type="chain" id="PRO_0000030063" description="S-adenosylmethionine decarboxylase beta chain" evidence="1">
    <location>
        <begin position="1"/>
        <end position="111"/>
    </location>
</feature>
<feature type="chain" id="PRO_0000030064" description="S-adenosylmethionine decarboxylase alpha chain" evidence="1">
    <location>
        <begin position="112"/>
        <end position="264"/>
    </location>
</feature>
<feature type="active site" description="Schiff-base intermediate with substrate; via pyruvic acid" evidence="1">
    <location>
        <position position="112"/>
    </location>
</feature>
<feature type="active site" description="Proton acceptor; for processing activity" evidence="1">
    <location>
        <position position="117"/>
    </location>
</feature>
<feature type="active site" description="Proton donor; for catalytic activity" evidence="1">
    <location>
        <position position="140"/>
    </location>
</feature>
<feature type="site" description="Cleavage (non-hydrolytic); by autolysis" evidence="1">
    <location>
        <begin position="111"/>
        <end position="112"/>
    </location>
</feature>
<feature type="modified residue" description="Pyruvic acid (Ser); by autocatalysis" evidence="1">
    <location>
        <position position="112"/>
    </location>
</feature>
<proteinExistence type="inferred from homology"/>
<dbReference type="EC" id="4.1.1.50" evidence="1"/>
<dbReference type="EMBL" id="AE005674">
    <property type="protein sequence ID" value="AAN41780.1"/>
    <property type="molecule type" value="Genomic_DNA"/>
</dbReference>
<dbReference type="EMBL" id="AE014073">
    <property type="protein sequence ID" value="AAP15661.1"/>
    <property type="molecule type" value="Genomic_DNA"/>
</dbReference>
<dbReference type="RefSeq" id="NP_706073.1">
    <property type="nucleotide sequence ID" value="NC_004337.2"/>
</dbReference>
<dbReference type="RefSeq" id="WP_000734287.1">
    <property type="nucleotide sequence ID" value="NZ_WPGW01000007.1"/>
</dbReference>
<dbReference type="STRING" id="198214.SF0117"/>
<dbReference type="PaxDb" id="198214-SF0117"/>
<dbReference type="GeneID" id="1025958"/>
<dbReference type="GeneID" id="93777316"/>
<dbReference type="KEGG" id="sfl:SF0117"/>
<dbReference type="KEGG" id="sfx:S0119"/>
<dbReference type="PATRIC" id="fig|198214.7.peg.133"/>
<dbReference type="HOGENOM" id="CLU_092007_0_0_6"/>
<dbReference type="UniPathway" id="UPA00331">
    <property type="reaction ID" value="UER00451"/>
</dbReference>
<dbReference type="Proteomes" id="UP000001006">
    <property type="component" value="Chromosome"/>
</dbReference>
<dbReference type="Proteomes" id="UP000002673">
    <property type="component" value="Chromosome"/>
</dbReference>
<dbReference type="GO" id="GO:0005829">
    <property type="term" value="C:cytosol"/>
    <property type="evidence" value="ECO:0007669"/>
    <property type="project" value="TreeGrafter"/>
</dbReference>
<dbReference type="GO" id="GO:0004014">
    <property type="term" value="F:adenosylmethionine decarboxylase activity"/>
    <property type="evidence" value="ECO:0007669"/>
    <property type="project" value="UniProtKB-UniRule"/>
</dbReference>
<dbReference type="GO" id="GO:0008295">
    <property type="term" value="P:spermidine biosynthetic process"/>
    <property type="evidence" value="ECO:0007669"/>
    <property type="project" value="UniProtKB-UniRule"/>
</dbReference>
<dbReference type="FunFam" id="3.60.90.10:FF:000001">
    <property type="entry name" value="S-adenosylmethionine decarboxylase proenzyme"/>
    <property type="match status" value="1"/>
</dbReference>
<dbReference type="Gene3D" id="3.60.90.10">
    <property type="entry name" value="S-adenosylmethionine decarboxylase"/>
    <property type="match status" value="1"/>
</dbReference>
<dbReference type="HAMAP" id="MF_00465">
    <property type="entry name" value="AdoMetDC_2"/>
    <property type="match status" value="1"/>
</dbReference>
<dbReference type="InterPro" id="IPR003826">
    <property type="entry name" value="AdoMetDC_fam_prok"/>
</dbReference>
<dbReference type="InterPro" id="IPR009165">
    <property type="entry name" value="S-AdoMet_deCO2ase_bac"/>
</dbReference>
<dbReference type="InterPro" id="IPR016067">
    <property type="entry name" value="S-AdoMet_deCO2ase_core"/>
</dbReference>
<dbReference type="NCBIfam" id="TIGR03331">
    <property type="entry name" value="SAM_DCase_Eco"/>
    <property type="match status" value="1"/>
</dbReference>
<dbReference type="PANTHER" id="PTHR33866">
    <property type="entry name" value="S-ADENOSYLMETHIONINE DECARBOXYLASE PROENZYME"/>
    <property type="match status" value="1"/>
</dbReference>
<dbReference type="PANTHER" id="PTHR33866:SF1">
    <property type="entry name" value="S-ADENOSYLMETHIONINE DECARBOXYLASE PROENZYME"/>
    <property type="match status" value="1"/>
</dbReference>
<dbReference type="Pfam" id="PF02675">
    <property type="entry name" value="AdoMet_dc"/>
    <property type="match status" value="1"/>
</dbReference>
<dbReference type="PIRSF" id="PIRSF001356">
    <property type="entry name" value="SAM_decarboxylas"/>
    <property type="match status" value="1"/>
</dbReference>
<dbReference type="SUPFAM" id="SSF56276">
    <property type="entry name" value="S-adenosylmethionine decarboxylase"/>
    <property type="match status" value="1"/>
</dbReference>
<organism>
    <name type="scientific">Shigella flexneri</name>
    <dbReference type="NCBI Taxonomy" id="623"/>
    <lineage>
        <taxon>Bacteria</taxon>
        <taxon>Pseudomonadati</taxon>
        <taxon>Pseudomonadota</taxon>
        <taxon>Gammaproteobacteria</taxon>
        <taxon>Enterobacterales</taxon>
        <taxon>Enterobacteriaceae</taxon>
        <taxon>Shigella</taxon>
    </lineage>
</organism>
<comment type="function">
    <text evidence="1">Catalyzes the decarboxylation of S-adenosylmethionine to S-adenosylmethioninamine (dcAdoMet), the propylamine donor required for the synthesis of the polyamines spermine and spermidine from the diamine putrescine.</text>
</comment>
<comment type="catalytic activity">
    <reaction evidence="1">
        <text>S-adenosyl-L-methionine + H(+) = S-adenosyl 3-(methylsulfanyl)propylamine + CO2</text>
        <dbReference type="Rhea" id="RHEA:15981"/>
        <dbReference type="ChEBI" id="CHEBI:15378"/>
        <dbReference type="ChEBI" id="CHEBI:16526"/>
        <dbReference type="ChEBI" id="CHEBI:57443"/>
        <dbReference type="ChEBI" id="CHEBI:59789"/>
        <dbReference type="EC" id="4.1.1.50"/>
    </reaction>
</comment>
<comment type="cofactor">
    <cofactor evidence="1">
        <name>pyruvate</name>
        <dbReference type="ChEBI" id="CHEBI:15361"/>
    </cofactor>
    <text evidence="1">Binds 1 pyruvoyl group covalently per subunit.</text>
</comment>
<comment type="pathway">
    <text evidence="1">Amine and polyamine biosynthesis; S-adenosylmethioninamine biosynthesis; S-adenosylmethioninamine from S-adenosyl-L-methionine: step 1/1.</text>
</comment>
<comment type="subunit">
    <text evidence="1">Heterooctamer of four alpha and four beta chains arranged as a tetramer of alpha/beta heterodimers.</text>
</comment>
<comment type="PTM">
    <text evidence="1">Is synthesized initially as an inactive proenzyme. Formation of the active enzyme involves a self-maturation process in which the active site pyruvoyl group is generated from an internal serine residue via an autocatalytic post-translational modification. Two non-identical subunits are generated from the proenzyme in this reaction, and the pyruvate is formed at the N-terminus of the alpha chain, which is derived from the carboxyl end of the proenzyme. The post-translation cleavage follows an unusual pathway, termed non-hydrolytic serinolysis, in which the side chain hydroxyl group of the serine supplies its oxygen atom to form the C-terminus of the beta chain, while the remainder of the serine residue undergoes an oxidative deamination to produce ammonia and the pyruvoyl group blocking the N-terminus of the alpha chain.</text>
</comment>
<comment type="similarity">
    <text evidence="1">Belongs to the prokaryotic AdoMetDC family. Type 2 subfamily.</text>
</comment>
<protein>
    <recommendedName>
        <fullName evidence="1">S-adenosylmethionine decarboxylase proenzyme</fullName>
        <shortName evidence="1">AdoMetDC</shortName>
        <shortName evidence="1">SAMDC</shortName>
        <ecNumber evidence="1">4.1.1.50</ecNumber>
    </recommendedName>
    <component>
        <recommendedName>
            <fullName evidence="1">S-adenosylmethionine decarboxylase beta chain</fullName>
        </recommendedName>
    </component>
    <component>
        <recommendedName>
            <fullName evidence="1">S-adenosylmethionine decarboxylase alpha chain</fullName>
        </recommendedName>
    </component>
</protein>
<keyword id="KW-0068">Autocatalytic cleavage</keyword>
<keyword id="KW-0210">Decarboxylase</keyword>
<keyword id="KW-0456">Lyase</keyword>
<keyword id="KW-0620">Polyamine biosynthesis</keyword>
<keyword id="KW-0670">Pyruvate</keyword>
<keyword id="KW-1185">Reference proteome</keyword>
<keyword id="KW-0949">S-adenosyl-L-methionine</keyword>
<keyword id="KW-0704">Schiff base</keyword>
<keyword id="KW-0745">Spermidine biosynthesis</keyword>
<keyword id="KW-0865">Zymogen</keyword>
<sequence>MKKLKLHGFNNLTKSLSFCIYDICYAKTAEERDGYIAYIDELYNANRLTEILSETCSIIGANILNIARQDYEPQGASVTILVSEEPVDPKLIDKTEHPGPLPETVVAHLDKSHICVHTYPESHPEGGLCTFRADIEVSTCGVISPLKALNYLIHQLESDIVTIDYRVRGFTRDINGMKHFIDHEINSIQNFMSDDMKALYDMVDVNVYQENIFHTKMLLKEFDLKHYMFHTKPEDLTDSERQEITAALWKEMREIYYGRNMPAV</sequence>
<name>SPED_SHIFL</name>
<gene>
    <name evidence="1" type="primary">speD</name>
    <name type="ordered locus">SF0117</name>
    <name type="ordered locus">S0119</name>
</gene>
<reference key="1">
    <citation type="journal article" date="2002" name="Nucleic Acids Res.">
        <title>Genome sequence of Shigella flexneri 2a: insights into pathogenicity through comparison with genomes of Escherichia coli K12 and O157.</title>
        <authorList>
            <person name="Jin Q."/>
            <person name="Yuan Z."/>
            <person name="Xu J."/>
            <person name="Wang Y."/>
            <person name="Shen Y."/>
            <person name="Lu W."/>
            <person name="Wang J."/>
            <person name="Liu H."/>
            <person name="Yang J."/>
            <person name="Yang F."/>
            <person name="Zhang X."/>
            <person name="Zhang J."/>
            <person name="Yang G."/>
            <person name="Wu H."/>
            <person name="Qu D."/>
            <person name="Dong J."/>
            <person name="Sun L."/>
            <person name="Xue Y."/>
            <person name="Zhao A."/>
            <person name="Gao Y."/>
            <person name="Zhu J."/>
            <person name="Kan B."/>
            <person name="Ding K."/>
            <person name="Chen S."/>
            <person name="Cheng H."/>
            <person name="Yao Z."/>
            <person name="He B."/>
            <person name="Chen R."/>
            <person name="Ma D."/>
            <person name="Qiang B."/>
            <person name="Wen Y."/>
            <person name="Hou Y."/>
            <person name="Yu J."/>
        </authorList>
    </citation>
    <scope>NUCLEOTIDE SEQUENCE [LARGE SCALE GENOMIC DNA]</scope>
    <source>
        <strain>301 / Serotype 2a</strain>
    </source>
</reference>
<reference key="2">
    <citation type="journal article" date="2003" name="Infect. Immun.">
        <title>Complete genome sequence and comparative genomics of Shigella flexneri serotype 2a strain 2457T.</title>
        <authorList>
            <person name="Wei J."/>
            <person name="Goldberg M.B."/>
            <person name="Burland V."/>
            <person name="Venkatesan M.M."/>
            <person name="Deng W."/>
            <person name="Fournier G."/>
            <person name="Mayhew G.F."/>
            <person name="Plunkett G. III"/>
            <person name="Rose D.J."/>
            <person name="Darling A."/>
            <person name="Mau B."/>
            <person name="Perna N.T."/>
            <person name="Payne S.M."/>
            <person name="Runyen-Janecky L.J."/>
            <person name="Zhou S."/>
            <person name="Schwartz D.C."/>
            <person name="Blattner F.R."/>
        </authorList>
    </citation>
    <scope>NUCLEOTIDE SEQUENCE [LARGE SCALE GENOMIC DNA]</scope>
    <source>
        <strain>ATCC 700930 / 2457T / Serotype 2a</strain>
    </source>
</reference>
<evidence type="ECO:0000255" key="1">
    <source>
        <dbReference type="HAMAP-Rule" id="MF_00465"/>
    </source>
</evidence>
<accession>P0A7F8</accession>
<accession>P09159</accession>